<comment type="function">
    <text evidence="1">Part of the ABC transporter complex LsrABCD involved in autoinducer 2 (AI-2) import. Binds AI-2 and delivers it to the LsrC and LsrD permeases (By similarity).</text>
</comment>
<comment type="subunit">
    <text evidence="1">The complex is composed of two ATP-binding proteins (LsrA), two transmembrane proteins (LsrC and LsrD) and a solute-binding protein (LsrB).</text>
</comment>
<comment type="subcellular location">
    <subcellularLocation>
        <location evidence="3">Periplasm</location>
    </subcellularLocation>
</comment>
<comment type="similarity">
    <text evidence="3">Belongs to the bacterial solute-binding protein 2 family.</text>
</comment>
<organism>
    <name type="scientific">Escherichia coli (strain ATCC 8739 / DSM 1576 / NBRC 3972 / NCIMB 8545 / WDCM 00012 / Crooks)</name>
    <dbReference type="NCBI Taxonomy" id="481805"/>
    <lineage>
        <taxon>Bacteria</taxon>
        <taxon>Pseudomonadati</taxon>
        <taxon>Pseudomonadota</taxon>
        <taxon>Gammaproteobacteria</taxon>
        <taxon>Enterobacterales</taxon>
        <taxon>Enterobacteriaceae</taxon>
        <taxon>Escherichia</taxon>
    </lineage>
</organism>
<reference key="1">
    <citation type="submission" date="2008-02" db="EMBL/GenBank/DDBJ databases">
        <title>Complete sequence of Escherichia coli C str. ATCC 8739.</title>
        <authorList>
            <person name="Copeland A."/>
            <person name="Lucas S."/>
            <person name="Lapidus A."/>
            <person name="Glavina del Rio T."/>
            <person name="Dalin E."/>
            <person name="Tice H."/>
            <person name="Bruce D."/>
            <person name="Goodwin L."/>
            <person name="Pitluck S."/>
            <person name="Kiss H."/>
            <person name="Brettin T."/>
            <person name="Detter J.C."/>
            <person name="Han C."/>
            <person name="Kuske C.R."/>
            <person name="Schmutz J."/>
            <person name="Larimer F."/>
            <person name="Land M."/>
            <person name="Hauser L."/>
            <person name="Kyrpides N."/>
            <person name="Mikhailova N."/>
            <person name="Ingram L."/>
            <person name="Richardson P."/>
        </authorList>
    </citation>
    <scope>NUCLEOTIDE SEQUENCE [LARGE SCALE GENOMIC DNA]</scope>
    <source>
        <strain>ATCC 8739 / DSM 1576 / NBRC 3972 / NCIMB 8545 / WDCM 00012 / Crooks</strain>
    </source>
</reference>
<evidence type="ECO:0000250" key="1"/>
<evidence type="ECO:0000255" key="2"/>
<evidence type="ECO:0000305" key="3"/>
<name>LSRB_ECOLC</name>
<feature type="signal peptide" evidence="2">
    <location>
        <begin position="1"/>
        <end position="26"/>
    </location>
</feature>
<feature type="chain" id="PRO_5000313841" description="Autoinducer 2-binding protein LsrB">
    <location>
        <begin position="27"/>
        <end position="340"/>
    </location>
</feature>
<sequence>MTLHRFKKIALLSVLGIAAISMNVQAAERIAFIPKLVGVGFFTSGGNGAQQAGKELGVDVTYDGPTEPSVSGQVQLINNFVNQGYNAIIVSAVSPDGLCPALKRAMQRGVRVLTWDSDTKPECRSYYINQGTPAQLGGMLVDMAARQVNKDKAKVAFFYSSPTVTDQNQWVKEAKAKIAKEHPGWEIVTTQFGYNDATKSLQTAEGILKAYSDLDAIIAPDANALPAAAQAAENLKNDKVAIVGFSTPNVMRPYVERGTVKEFGLWDVVQQGKISVYVADALLKKGSMKTGDKLDIQGVGQVEVSPNSVQGYDYEADGNGIVLLPERVIFNKENIGKYDF</sequence>
<accession>B1IRU4</accession>
<protein>
    <recommendedName>
        <fullName>Autoinducer 2-binding protein LsrB</fullName>
        <shortName>AI-2-binding protein LsrB</shortName>
    </recommendedName>
</protein>
<keyword id="KW-0574">Periplasm</keyword>
<keyword id="KW-0732">Signal</keyword>
<proteinExistence type="inferred from homology"/>
<gene>
    <name type="primary">lsrB</name>
    <name type="ordered locus">EcolC_2142</name>
</gene>
<dbReference type="EMBL" id="CP000946">
    <property type="protein sequence ID" value="ACA77782.1"/>
    <property type="molecule type" value="Genomic_DNA"/>
</dbReference>
<dbReference type="RefSeq" id="WP_000172488.1">
    <property type="nucleotide sequence ID" value="NZ_MTFT01000006.1"/>
</dbReference>
<dbReference type="SMR" id="B1IRU4"/>
<dbReference type="KEGG" id="ecl:EcolC_2142"/>
<dbReference type="HOGENOM" id="CLU_037628_3_0_6"/>
<dbReference type="GO" id="GO:0043190">
    <property type="term" value="C:ATP-binding cassette (ABC) transporter complex"/>
    <property type="evidence" value="ECO:0007669"/>
    <property type="project" value="InterPro"/>
</dbReference>
<dbReference type="GO" id="GO:0030288">
    <property type="term" value="C:outer membrane-bounded periplasmic space"/>
    <property type="evidence" value="ECO:0007669"/>
    <property type="project" value="TreeGrafter"/>
</dbReference>
<dbReference type="GO" id="GO:0030246">
    <property type="term" value="F:carbohydrate binding"/>
    <property type="evidence" value="ECO:0007669"/>
    <property type="project" value="TreeGrafter"/>
</dbReference>
<dbReference type="GO" id="GO:0055085">
    <property type="term" value="P:transmembrane transport"/>
    <property type="evidence" value="ECO:0007669"/>
    <property type="project" value="UniProtKB-ARBA"/>
</dbReference>
<dbReference type="CDD" id="cd20003">
    <property type="entry name" value="PBP1_LsrB_Quorum_Sensing"/>
    <property type="match status" value="1"/>
</dbReference>
<dbReference type="Gene3D" id="3.40.50.2300">
    <property type="match status" value="2"/>
</dbReference>
<dbReference type="InterPro" id="IPR050555">
    <property type="entry name" value="Bact_Solute-Bind_Prot2"/>
</dbReference>
<dbReference type="InterPro" id="IPR030159">
    <property type="entry name" value="LsrB"/>
</dbReference>
<dbReference type="InterPro" id="IPR028082">
    <property type="entry name" value="Peripla_BP_I"/>
</dbReference>
<dbReference type="InterPro" id="IPR025997">
    <property type="entry name" value="SBP_2_dom"/>
</dbReference>
<dbReference type="NCBIfam" id="NF011937">
    <property type="entry name" value="PRK15408.1"/>
    <property type="match status" value="1"/>
</dbReference>
<dbReference type="PANTHER" id="PTHR30036:SF7">
    <property type="entry name" value="ABC TRANSPORTER PERIPLASMIC-BINDING PROTEIN YPHF"/>
    <property type="match status" value="1"/>
</dbReference>
<dbReference type="PANTHER" id="PTHR30036">
    <property type="entry name" value="D-XYLOSE-BINDING PERIPLASMIC PROTEIN"/>
    <property type="match status" value="1"/>
</dbReference>
<dbReference type="Pfam" id="PF13407">
    <property type="entry name" value="Peripla_BP_4"/>
    <property type="match status" value="1"/>
</dbReference>
<dbReference type="SUPFAM" id="SSF53822">
    <property type="entry name" value="Periplasmic binding protein-like I"/>
    <property type="match status" value="1"/>
</dbReference>